<sequence>MEVNILAFIATALFVLIPTAFLIILYVKTESSSS</sequence>
<reference key="1">
    <citation type="journal article" date="2005" name="BMC Biol.">
        <title>The complete chloroplast DNA sequences of the charophycean green algae Staurastrum and Zygnema reveal that the chloroplast genome underwent extensive changes during the evolution of the Zygnematales.</title>
        <authorList>
            <person name="Turmel M."/>
            <person name="Otis C."/>
            <person name="Lemieux C."/>
        </authorList>
    </citation>
    <scope>NUCLEOTIDE SEQUENCE [LARGE SCALE GENOMIC DNA]</scope>
</reference>
<protein>
    <recommendedName>
        <fullName evidence="1">Photosystem II reaction center protein M</fullName>
        <shortName evidence="1">PSII-M</shortName>
    </recommendedName>
</protein>
<evidence type="ECO:0000255" key="1">
    <source>
        <dbReference type="HAMAP-Rule" id="MF_00438"/>
    </source>
</evidence>
<name>PSBM_ZYGCR</name>
<keyword id="KW-0150">Chloroplast</keyword>
<keyword id="KW-0472">Membrane</keyword>
<keyword id="KW-0602">Photosynthesis</keyword>
<keyword id="KW-0604">Photosystem II</keyword>
<keyword id="KW-0934">Plastid</keyword>
<keyword id="KW-0674">Reaction center</keyword>
<keyword id="KW-0793">Thylakoid</keyword>
<keyword id="KW-0812">Transmembrane</keyword>
<keyword id="KW-1133">Transmembrane helix</keyword>
<accession>Q32RP5</accession>
<comment type="function">
    <text evidence="1">One of the components of the core complex of photosystem II (PSII). PSII is a light-driven water:plastoquinone oxidoreductase that uses light energy to abstract electrons from H(2)O, generating O(2) and a proton gradient subsequently used for ATP formation. It consists of a core antenna complex that captures photons, and an electron transfer chain that converts photonic excitation into a charge separation. This subunit is found at the monomer-monomer interface.</text>
</comment>
<comment type="subunit">
    <text evidence="1">PSII is composed of 1 copy each of membrane proteins PsbA, PsbB, PsbC, PsbD, PsbE, PsbF, PsbH, PsbI, PsbJ, PsbK, PsbL, PsbM, PsbT, PsbX, PsbY, PsbZ, Psb30/Ycf12, at least 3 peripheral proteins of the oxygen-evolving complex and a large number of cofactors. It forms dimeric complexes.</text>
</comment>
<comment type="subcellular location">
    <subcellularLocation>
        <location evidence="1">Plastid</location>
        <location evidence="1">Chloroplast thylakoid membrane</location>
        <topology evidence="1">Single-pass membrane protein</topology>
    </subcellularLocation>
</comment>
<comment type="similarity">
    <text evidence="1">Belongs to the PsbM family.</text>
</comment>
<dbReference type="EMBL" id="AY958086">
    <property type="protein sequence ID" value="AAX45847.1"/>
    <property type="molecule type" value="Genomic_DNA"/>
</dbReference>
<dbReference type="RefSeq" id="YP_636481.1">
    <property type="nucleotide sequence ID" value="NC_008117.1"/>
</dbReference>
<dbReference type="SMR" id="Q32RP5"/>
<dbReference type="GeneID" id="4108167"/>
<dbReference type="GO" id="GO:0009535">
    <property type="term" value="C:chloroplast thylakoid membrane"/>
    <property type="evidence" value="ECO:0007669"/>
    <property type="project" value="UniProtKB-SubCell"/>
</dbReference>
<dbReference type="GO" id="GO:0009523">
    <property type="term" value="C:photosystem II"/>
    <property type="evidence" value="ECO:0007669"/>
    <property type="project" value="UniProtKB-KW"/>
</dbReference>
<dbReference type="GO" id="GO:0019684">
    <property type="term" value="P:photosynthesis, light reaction"/>
    <property type="evidence" value="ECO:0007669"/>
    <property type="project" value="InterPro"/>
</dbReference>
<dbReference type="HAMAP" id="MF_00438">
    <property type="entry name" value="PSII_PsbM"/>
    <property type="match status" value="1"/>
</dbReference>
<dbReference type="InterPro" id="IPR007826">
    <property type="entry name" value="PSII_PsbM"/>
</dbReference>
<dbReference type="InterPro" id="IPR037269">
    <property type="entry name" value="PSII_PsbM_sf"/>
</dbReference>
<dbReference type="NCBIfam" id="TIGR03038">
    <property type="entry name" value="PS_II_psbM"/>
    <property type="match status" value="1"/>
</dbReference>
<dbReference type="PANTHER" id="PTHR35774">
    <property type="entry name" value="PHOTOSYSTEM II REACTION CENTER PROTEIN M"/>
    <property type="match status" value="1"/>
</dbReference>
<dbReference type="PANTHER" id="PTHR35774:SF1">
    <property type="entry name" value="PHOTOSYSTEM II REACTION CENTER PROTEIN M"/>
    <property type="match status" value="1"/>
</dbReference>
<dbReference type="Pfam" id="PF05151">
    <property type="entry name" value="PsbM"/>
    <property type="match status" value="1"/>
</dbReference>
<dbReference type="SUPFAM" id="SSF161033">
    <property type="entry name" value="Photosystem II reaction center protein M, PsbM"/>
    <property type="match status" value="1"/>
</dbReference>
<gene>
    <name evidence="1" type="primary">psbM</name>
</gene>
<proteinExistence type="inferred from homology"/>
<geneLocation type="chloroplast"/>
<feature type="chain" id="PRO_0000276262" description="Photosystem II reaction center protein M">
    <location>
        <begin position="1"/>
        <end position="34"/>
    </location>
</feature>
<feature type="transmembrane region" description="Helical" evidence="1">
    <location>
        <begin position="5"/>
        <end position="25"/>
    </location>
</feature>
<organism>
    <name type="scientific">Zygnema circumcarinatum</name>
    <name type="common">Green alga</name>
    <dbReference type="NCBI Taxonomy" id="35869"/>
    <lineage>
        <taxon>Eukaryota</taxon>
        <taxon>Viridiplantae</taxon>
        <taxon>Streptophyta</taxon>
        <taxon>Zygnematophyceae</taxon>
        <taxon>Zygnematophycidae</taxon>
        <taxon>Zygnematales</taxon>
        <taxon>Zygnemataceae</taxon>
        <taxon>Zygnema</taxon>
    </lineage>
</organism>